<organism>
    <name type="scientific">Fervidobacterium nodosum (strain ATCC 35602 / DSM 5306 / Rt17-B1)</name>
    <dbReference type="NCBI Taxonomy" id="381764"/>
    <lineage>
        <taxon>Bacteria</taxon>
        <taxon>Thermotogati</taxon>
        <taxon>Thermotogota</taxon>
        <taxon>Thermotogae</taxon>
        <taxon>Thermotogales</taxon>
        <taxon>Fervidobacteriaceae</taxon>
        <taxon>Fervidobacterium</taxon>
    </lineage>
</organism>
<gene>
    <name type="primary">acyP</name>
    <name type="ordered locus">Fnod_1283</name>
</gene>
<protein>
    <recommendedName>
        <fullName>Acylphosphatase</fullName>
        <ecNumber>3.6.1.7</ecNumber>
    </recommendedName>
    <alternativeName>
        <fullName>Acylphosphate phosphohydrolase</fullName>
    </alternativeName>
</protein>
<proteinExistence type="inferred from homology"/>
<name>ACYP_FERNB</name>
<evidence type="ECO:0000255" key="1">
    <source>
        <dbReference type="PROSITE-ProRule" id="PRU00520"/>
    </source>
</evidence>
<evidence type="ECO:0000305" key="2"/>
<comment type="catalytic activity">
    <reaction>
        <text>an acyl phosphate + H2O = a carboxylate + phosphate + H(+)</text>
        <dbReference type="Rhea" id="RHEA:14965"/>
        <dbReference type="ChEBI" id="CHEBI:15377"/>
        <dbReference type="ChEBI" id="CHEBI:15378"/>
        <dbReference type="ChEBI" id="CHEBI:29067"/>
        <dbReference type="ChEBI" id="CHEBI:43474"/>
        <dbReference type="ChEBI" id="CHEBI:59918"/>
        <dbReference type="EC" id="3.6.1.7"/>
    </reaction>
</comment>
<comment type="similarity">
    <text evidence="2">Belongs to the acylphosphatase family.</text>
</comment>
<feature type="chain" id="PRO_0000326710" description="Acylphosphatase">
    <location>
        <begin position="1"/>
        <end position="91"/>
    </location>
</feature>
<feature type="domain" description="Acylphosphatase-like" evidence="1">
    <location>
        <begin position="5"/>
        <end position="91"/>
    </location>
</feature>
<feature type="active site" evidence="1">
    <location>
        <position position="20"/>
    </location>
</feature>
<feature type="active site" evidence="1">
    <location>
        <position position="38"/>
    </location>
</feature>
<reference key="1">
    <citation type="submission" date="2007-07" db="EMBL/GenBank/DDBJ databases">
        <title>Complete sequence of Fervidobacterium nodosum Rt17-B1.</title>
        <authorList>
            <consortium name="US DOE Joint Genome Institute"/>
            <person name="Copeland A."/>
            <person name="Lucas S."/>
            <person name="Lapidus A."/>
            <person name="Barry K."/>
            <person name="Glavina del Rio T."/>
            <person name="Dalin E."/>
            <person name="Tice H."/>
            <person name="Pitluck S."/>
            <person name="Saunders E."/>
            <person name="Brettin T."/>
            <person name="Bruce D."/>
            <person name="Detter J.C."/>
            <person name="Han C."/>
            <person name="Schmutz J."/>
            <person name="Larimer F."/>
            <person name="Land M."/>
            <person name="Hauser L."/>
            <person name="Kyrpides N."/>
            <person name="Mikhailova N."/>
            <person name="Nelson K."/>
            <person name="Gogarten J.P."/>
            <person name="Noll K."/>
            <person name="Richardson P."/>
        </authorList>
    </citation>
    <scope>NUCLEOTIDE SEQUENCE [LARGE SCALE GENOMIC DNA]</scope>
    <source>
        <strain>ATCC 35602 / DSM 5306 / Rt17-B1</strain>
    </source>
</reference>
<dbReference type="EC" id="3.6.1.7"/>
<dbReference type="EMBL" id="CP000771">
    <property type="protein sequence ID" value="ABS61130.1"/>
    <property type="molecule type" value="Genomic_DNA"/>
</dbReference>
<dbReference type="RefSeq" id="WP_011994439.1">
    <property type="nucleotide sequence ID" value="NC_009718.1"/>
</dbReference>
<dbReference type="SMR" id="A7HMJ7"/>
<dbReference type="STRING" id="381764.Fnod_1283"/>
<dbReference type="KEGG" id="fno:Fnod_1283"/>
<dbReference type="eggNOG" id="COG1254">
    <property type="taxonomic scope" value="Bacteria"/>
</dbReference>
<dbReference type="HOGENOM" id="CLU_141932_2_1_0"/>
<dbReference type="OrthoDB" id="9808093at2"/>
<dbReference type="Proteomes" id="UP000002415">
    <property type="component" value="Chromosome"/>
</dbReference>
<dbReference type="GO" id="GO:0003998">
    <property type="term" value="F:acylphosphatase activity"/>
    <property type="evidence" value="ECO:0007669"/>
    <property type="project" value="UniProtKB-EC"/>
</dbReference>
<dbReference type="Gene3D" id="3.30.70.100">
    <property type="match status" value="1"/>
</dbReference>
<dbReference type="InterPro" id="IPR020456">
    <property type="entry name" value="Acylphosphatase"/>
</dbReference>
<dbReference type="InterPro" id="IPR001792">
    <property type="entry name" value="Acylphosphatase-like_dom"/>
</dbReference>
<dbReference type="InterPro" id="IPR036046">
    <property type="entry name" value="Acylphosphatase-like_dom_sf"/>
</dbReference>
<dbReference type="InterPro" id="IPR017968">
    <property type="entry name" value="Acylphosphatase_CS"/>
</dbReference>
<dbReference type="PANTHER" id="PTHR47268">
    <property type="entry name" value="ACYLPHOSPHATASE"/>
    <property type="match status" value="1"/>
</dbReference>
<dbReference type="PANTHER" id="PTHR47268:SF4">
    <property type="entry name" value="ACYLPHOSPHATASE"/>
    <property type="match status" value="1"/>
</dbReference>
<dbReference type="Pfam" id="PF00708">
    <property type="entry name" value="Acylphosphatase"/>
    <property type="match status" value="1"/>
</dbReference>
<dbReference type="SUPFAM" id="SSF54975">
    <property type="entry name" value="Acylphosphatase/BLUF domain-like"/>
    <property type="match status" value="1"/>
</dbReference>
<dbReference type="PROSITE" id="PS00150">
    <property type="entry name" value="ACYLPHOSPHATASE_1"/>
    <property type="match status" value="1"/>
</dbReference>
<dbReference type="PROSITE" id="PS00151">
    <property type="entry name" value="ACYLPHOSPHATASE_2"/>
    <property type="match status" value="1"/>
</dbReference>
<dbReference type="PROSITE" id="PS51160">
    <property type="entry name" value="ACYLPHOSPHATASE_3"/>
    <property type="match status" value="1"/>
</dbReference>
<keyword id="KW-0378">Hydrolase</keyword>
<keyword id="KW-1185">Reference proteome</keyword>
<sequence length="91" mass="10581">MLEVWKKWNVRGVVQGVGFRHFVKNVARAIGVRGYVKNEDDGSVTIVAGGNDEQIKELFRRIMEGNGWSYISDYDEIDLPKQEYKDFHVEF</sequence>
<accession>A7HMJ7</accession>